<dbReference type="EMBL" id="AE007869">
    <property type="protein sequence ID" value="AAK87694.2"/>
    <property type="molecule type" value="Genomic_DNA"/>
</dbReference>
<dbReference type="PIR" id="AI2813">
    <property type="entry name" value="AI2813"/>
</dbReference>
<dbReference type="PIR" id="E97592">
    <property type="entry name" value="E97592"/>
</dbReference>
<dbReference type="RefSeq" id="NP_354909.2">
    <property type="nucleotide sequence ID" value="NC_003062.2"/>
</dbReference>
<dbReference type="RefSeq" id="WP_006313979.1">
    <property type="nucleotide sequence ID" value="NC_003062.2"/>
</dbReference>
<dbReference type="SMR" id="Q8UE33"/>
<dbReference type="STRING" id="176299.Atu1931"/>
<dbReference type="EnsemblBacteria" id="AAK87694">
    <property type="protein sequence ID" value="AAK87694"/>
    <property type="gene ID" value="Atu1931"/>
</dbReference>
<dbReference type="GeneID" id="1133969"/>
<dbReference type="KEGG" id="atu:Atu1931"/>
<dbReference type="PATRIC" id="fig|176299.10.peg.1943"/>
<dbReference type="eggNOG" id="COG0097">
    <property type="taxonomic scope" value="Bacteria"/>
</dbReference>
<dbReference type="HOGENOM" id="CLU_065464_1_2_5"/>
<dbReference type="OrthoDB" id="9805007at2"/>
<dbReference type="PhylomeDB" id="Q8UE33"/>
<dbReference type="BioCyc" id="AGRO:ATU1931-MONOMER"/>
<dbReference type="Proteomes" id="UP000000813">
    <property type="component" value="Chromosome circular"/>
</dbReference>
<dbReference type="GO" id="GO:0022625">
    <property type="term" value="C:cytosolic large ribosomal subunit"/>
    <property type="evidence" value="ECO:0007669"/>
    <property type="project" value="TreeGrafter"/>
</dbReference>
<dbReference type="GO" id="GO:0019843">
    <property type="term" value="F:rRNA binding"/>
    <property type="evidence" value="ECO:0007669"/>
    <property type="project" value="UniProtKB-UniRule"/>
</dbReference>
<dbReference type="GO" id="GO:0003735">
    <property type="term" value="F:structural constituent of ribosome"/>
    <property type="evidence" value="ECO:0007669"/>
    <property type="project" value="InterPro"/>
</dbReference>
<dbReference type="GO" id="GO:0002181">
    <property type="term" value="P:cytoplasmic translation"/>
    <property type="evidence" value="ECO:0007669"/>
    <property type="project" value="TreeGrafter"/>
</dbReference>
<dbReference type="FunFam" id="3.90.930.12:FF:000001">
    <property type="entry name" value="50S ribosomal protein L6"/>
    <property type="match status" value="1"/>
</dbReference>
<dbReference type="Gene3D" id="3.90.930.12">
    <property type="entry name" value="Ribosomal protein L6, alpha-beta domain"/>
    <property type="match status" value="2"/>
</dbReference>
<dbReference type="HAMAP" id="MF_01365_B">
    <property type="entry name" value="Ribosomal_uL6_B"/>
    <property type="match status" value="1"/>
</dbReference>
<dbReference type="InterPro" id="IPR000702">
    <property type="entry name" value="Ribosomal_uL6-like"/>
</dbReference>
<dbReference type="InterPro" id="IPR036789">
    <property type="entry name" value="Ribosomal_uL6-like_a/b-dom_sf"/>
</dbReference>
<dbReference type="InterPro" id="IPR020040">
    <property type="entry name" value="Ribosomal_uL6_a/b-dom"/>
</dbReference>
<dbReference type="InterPro" id="IPR019906">
    <property type="entry name" value="Ribosomal_uL6_bac-type"/>
</dbReference>
<dbReference type="InterPro" id="IPR002358">
    <property type="entry name" value="Ribosomal_uL6_CS"/>
</dbReference>
<dbReference type="NCBIfam" id="TIGR03654">
    <property type="entry name" value="L6_bact"/>
    <property type="match status" value="1"/>
</dbReference>
<dbReference type="PANTHER" id="PTHR11655">
    <property type="entry name" value="60S/50S RIBOSOMAL PROTEIN L6/L9"/>
    <property type="match status" value="1"/>
</dbReference>
<dbReference type="PANTHER" id="PTHR11655:SF14">
    <property type="entry name" value="LARGE RIBOSOMAL SUBUNIT PROTEIN UL6M"/>
    <property type="match status" value="1"/>
</dbReference>
<dbReference type="Pfam" id="PF00347">
    <property type="entry name" value="Ribosomal_L6"/>
    <property type="match status" value="2"/>
</dbReference>
<dbReference type="PIRSF" id="PIRSF002162">
    <property type="entry name" value="Ribosomal_L6"/>
    <property type="match status" value="1"/>
</dbReference>
<dbReference type="PRINTS" id="PR00059">
    <property type="entry name" value="RIBOSOMALL6"/>
</dbReference>
<dbReference type="SUPFAM" id="SSF56053">
    <property type="entry name" value="Ribosomal protein L6"/>
    <property type="match status" value="2"/>
</dbReference>
<dbReference type="PROSITE" id="PS00525">
    <property type="entry name" value="RIBOSOMAL_L6_1"/>
    <property type="match status" value="1"/>
</dbReference>
<comment type="function">
    <text evidence="1">This protein binds to the 23S rRNA, and is important in its secondary structure. It is located near the subunit interface in the base of the L7/L12 stalk, and near the tRNA binding site of the peptidyltransferase center.</text>
</comment>
<comment type="subunit">
    <text evidence="1">Part of the 50S ribosomal subunit.</text>
</comment>
<comment type="similarity">
    <text evidence="1">Belongs to the universal ribosomal protein uL6 family.</text>
</comment>
<accession>Q8UE33</accession>
<accession>Q7CY80</accession>
<organism>
    <name type="scientific">Agrobacterium fabrum (strain C58 / ATCC 33970)</name>
    <name type="common">Agrobacterium tumefaciens (strain C58)</name>
    <dbReference type="NCBI Taxonomy" id="176299"/>
    <lineage>
        <taxon>Bacteria</taxon>
        <taxon>Pseudomonadati</taxon>
        <taxon>Pseudomonadota</taxon>
        <taxon>Alphaproteobacteria</taxon>
        <taxon>Hyphomicrobiales</taxon>
        <taxon>Rhizobiaceae</taxon>
        <taxon>Rhizobium/Agrobacterium group</taxon>
        <taxon>Agrobacterium</taxon>
        <taxon>Agrobacterium tumefaciens complex</taxon>
    </lineage>
</organism>
<protein>
    <recommendedName>
        <fullName evidence="1">Large ribosomal subunit protein uL6</fullName>
    </recommendedName>
    <alternativeName>
        <fullName evidence="2">50S ribosomal protein L6</fullName>
    </alternativeName>
</protein>
<name>RL6_AGRFC</name>
<sequence>MSRIGKKPVPVPAGVTANVDGQKVTAKGPKGELFFVANDDIQLKLEDNGVSVTPANGTKEARSKWGMSRTMIENIFKGVKDGYERKLEINGVGYRAALQGKNLQLALGFSHDVVYEPPVGITIAVPKPTEIIVSGINKQQVGQVAAEIREYRGPEPYKGKGVKYAEERIVRKEGKKK</sequence>
<feature type="chain" id="PRO_0000265209" description="Large ribosomal subunit protein uL6">
    <location>
        <begin position="1"/>
        <end position="177"/>
    </location>
</feature>
<gene>
    <name evidence="1" type="primary">rplF</name>
    <name type="ordered locus">Atu1931</name>
    <name type="ORF">AGR_C_3532</name>
</gene>
<evidence type="ECO:0000255" key="1">
    <source>
        <dbReference type="HAMAP-Rule" id="MF_01365"/>
    </source>
</evidence>
<evidence type="ECO:0000305" key="2"/>
<keyword id="KW-1185">Reference proteome</keyword>
<keyword id="KW-0687">Ribonucleoprotein</keyword>
<keyword id="KW-0689">Ribosomal protein</keyword>
<keyword id="KW-0694">RNA-binding</keyword>
<keyword id="KW-0699">rRNA-binding</keyword>
<proteinExistence type="inferred from homology"/>
<reference key="1">
    <citation type="journal article" date="2001" name="Science">
        <title>The genome of the natural genetic engineer Agrobacterium tumefaciens C58.</title>
        <authorList>
            <person name="Wood D.W."/>
            <person name="Setubal J.C."/>
            <person name="Kaul R."/>
            <person name="Monks D.E."/>
            <person name="Kitajima J.P."/>
            <person name="Okura V.K."/>
            <person name="Zhou Y."/>
            <person name="Chen L."/>
            <person name="Wood G.E."/>
            <person name="Almeida N.F. Jr."/>
            <person name="Woo L."/>
            <person name="Chen Y."/>
            <person name="Paulsen I.T."/>
            <person name="Eisen J.A."/>
            <person name="Karp P.D."/>
            <person name="Bovee D. Sr."/>
            <person name="Chapman P."/>
            <person name="Clendenning J."/>
            <person name="Deatherage G."/>
            <person name="Gillet W."/>
            <person name="Grant C."/>
            <person name="Kutyavin T."/>
            <person name="Levy R."/>
            <person name="Li M.-J."/>
            <person name="McClelland E."/>
            <person name="Palmieri A."/>
            <person name="Raymond C."/>
            <person name="Rouse G."/>
            <person name="Saenphimmachak C."/>
            <person name="Wu Z."/>
            <person name="Romero P."/>
            <person name="Gordon D."/>
            <person name="Zhang S."/>
            <person name="Yoo H."/>
            <person name="Tao Y."/>
            <person name="Biddle P."/>
            <person name="Jung M."/>
            <person name="Krespan W."/>
            <person name="Perry M."/>
            <person name="Gordon-Kamm B."/>
            <person name="Liao L."/>
            <person name="Kim S."/>
            <person name="Hendrick C."/>
            <person name="Zhao Z.-Y."/>
            <person name="Dolan M."/>
            <person name="Chumley F."/>
            <person name="Tingey S.V."/>
            <person name="Tomb J.-F."/>
            <person name="Gordon M.P."/>
            <person name="Olson M.V."/>
            <person name="Nester E.W."/>
        </authorList>
    </citation>
    <scope>NUCLEOTIDE SEQUENCE [LARGE SCALE GENOMIC DNA]</scope>
    <source>
        <strain>C58 / ATCC 33970</strain>
    </source>
</reference>
<reference key="2">
    <citation type="journal article" date="2001" name="Science">
        <title>Genome sequence of the plant pathogen and biotechnology agent Agrobacterium tumefaciens C58.</title>
        <authorList>
            <person name="Goodner B."/>
            <person name="Hinkle G."/>
            <person name="Gattung S."/>
            <person name="Miller N."/>
            <person name="Blanchard M."/>
            <person name="Qurollo B."/>
            <person name="Goldman B.S."/>
            <person name="Cao Y."/>
            <person name="Askenazi M."/>
            <person name="Halling C."/>
            <person name="Mullin L."/>
            <person name="Houmiel K."/>
            <person name="Gordon J."/>
            <person name="Vaudin M."/>
            <person name="Iartchouk O."/>
            <person name="Epp A."/>
            <person name="Liu F."/>
            <person name="Wollam C."/>
            <person name="Allinger M."/>
            <person name="Doughty D."/>
            <person name="Scott C."/>
            <person name="Lappas C."/>
            <person name="Markelz B."/>
            <person name="Flanagan C."/>
            <person name="Crowell C."/>
            <person name="Gurson J."/>
            <person name="Lomo C."/>
            <person name="Sear C."/>
            <person name="Strub G."/>
            <person name="Cielo C."/>
            <person name="Slater S."/>
        </authorList>
    </citation>
    <scope>NUCLEOTIDE SEQUENCE [LARGE SCALE GENOMIC DNA]</scope>
    <source>
        <strain>C58 / ATCC 33970</strain>
    </source>
</reference>